<sequence>MKRHRISIPYVTDQVLRNTSDVVDPNDTVDQLISDDVVNPKQDLKEFLDSRELNYRTRASLASSYDDDDWADSIVDLSQRPHNKMEESSLHDDKAIKQATQLNTDYNQLRSPNANSIGGQSVIKDVSSERKPPVNQIPEDQQIYPSQMYPLLEVPESYHSLIPKLQFFFKYYGLYEDSDYVVDKDNQGYYFYPTKKWTTRDQKELMDNISKGVDHDDNLLDLEEKTSDNLFEENLNVHQLVDFVTKGFYVEKRNIKGKYYFDINNPSLNINKIANVDCQDKILSAKEKIDMIFKASGIYRAMKLKAKW</sequence>
<dbReference type="EMBL" id="GQ294472">
    <property type="protein sequence ID" value="ADG86348.1"/>
    <property type="molecule type" value="Viral_cRNA"/>
</dbReference>
<dbReference type="RefSeq" id="YP_007641369.1">
    <property type="nucleotide sequence ID" value="NC_020804.1"/>
</dbReference>
<dbReference type="GeneID" id="14857899"/>
<dbReference type="KEGG" id="vg:14857899"/>
<dbReference type="Proteomes" id="UP000029770">
    <property type="component" value="Segment"/>
</dbReference>
<dbReference type="GO" id="GO:0030430">
    <property type="term" value="C:host cell cytoplasm"/>
    <property type="evidence" value="ECO:0007669"/>
    <property type="project" value="UniProtKB-SubCell"/>
</dbReference>
<dbReference type="GO" id="GO:0044423">
    <property type="term" value="C:virion component"/>
    <property type="evidence" value="ECO:0007669"/>
    <property type="project" value="UniProtKB-KW"/>
</dbReference>
<dbReference type="GO" id="GO:0019083">
    <property type="term" value="P:viral transcription"/>
    <property type="evidence" value="ECO:0007669"/>
    <property type="project" value="UniProtKB-KW"/>
</dbReference>
<feature type="chain" id="PRO_0000432070" description="Phosphoprotein">
    <location>
        <begin position="1"/>
        <end position="308"/>
    </location>
</feature>
<evidence type="ECO:0000250" key="1">
    <source>
        <dbReference type="UniProtKB" id="P03520"/>
    </source>
</evidence>
<accession>D8V071</accession>
<protein>
    <recommendedName>
        <fullName>Phosphoprotein</fullName>
        <shortName>P protein</shortName>
    </recommendedName>
</protein>
<reference key="1">
    <citation type="journal article" date="2011" name="J. Gen. Virol.">
        <title>Tibrogargan and Coastal Plains rhabdoviruses: genomic characterization, evolution of novel genes and seroprevalence in Australian livestock.</title>
        <authorList>
            <person name="Gubala A."/>
            <person name="Davis S."/>
            <person name="Weir R."/>
            <person name="Melville L."/>
            <person name="Cowled C."/>
            <person name="Boyle D."/>
        </authorList>
    </citation>
    <scope>NUCLEOTIDE SEQUENCE [GENOMIC RNA]</scope>
    <source>
        <strain>CS132</strain>
    </source>
</reference>
<keyword id="KW-0143">Chaperone</keyword>
<keyword id="KW-1035">Host cytoplasm</keyword>
<keyword id="KW-0597">Phosphoprotein</keyword>
<keyword id="KW-1185">Reference proteome</keyword>
<keyword id="KW-0693">Viral RNA replication</keyword>
<keyword id="KW-1195">Viral transcription</keyword>
<keyword id="KW-0946">Virion</keyword>
<name>PHOSP_TIBVC</name>
<proteinExistence type="inferred from homology"/>
<organism>
    <name type="scientific">Tibrogargan virus (strain CS132)</name>
    <name type="common">TIBV</name>
    <dbReference type="NCBI Taxonomy" id="1559361"/>
    <lineage>
        <taxon>Viruses</taxon>
        <taxon>Riboviria</taxon>
        <taxon>Orthornavirae</taxon>
        <taxon>Negarnaviricota</taxon>
        <taxon>Haploviricotina</taxon>
        <taxon>Monjiviricetes</taxon>
        <taxon>Mononegavirales</taxon>
        <taxon>Rhabdoviridae</taxon>
        <taxon>Alpharhabdovirinae</taxon>
        <taxon>Tibrovirus</taxon>
        <taxon>Tibrovirus tibrogargan</taxon>
    </lineage>
</organism>
<organismHost>
    <name type="scientific">Bos taurus</name>
    <name type="common">Bovine</name>
    <dbReference type="NCBI Taxonomy" id="9913"/>
</organismHost>
<organismHost>
    <name type="scientific">Culicoides brevitarsis</name>
    <dbReference type="NCBI Taxonomy" id="469753"/>
</organismHost>
<gene>
    <name type="primary">P</name>
</gene>
<comment type="function">
    <text evidence="1">Essential component of the RNA polymerase transcription and replication complex. Binds the viral ribonucleocapsid and positions the L polymerase on the template. May act as a chaperone for newly synthesized free N protein, so-called N(0). Plays a role in virion assembly.</text>
</comment>
<comment type="subunit">
    <text evidence="1">Homotrimer. This trimer is stabilized by binding to the L protein. Binds N(0), and N in ribonucleocapsid.</text>
</comment>
<comment type="subcellular location">
    <subcellularLocation>
        <location evidence="1">Virion</location>
    </subcellularLocation>
    <subcellularLocation>
        <location evidence="1">Host cytoplasm</location>
    </subcellularLocation>
</comment>
<comment type="PTM">
    <text evidence="1">Phosphorylated by host kinases. Phosphorylation play an important role in facilitating trimerization and possibly P-L complex formation.</text>
</comment>